<dbReference type="EMBL" id="CR861048">
    <property type="protein sequence ID" value="CAH93136.1"/>
    <property type="molecule type" value="mRNA"/>
</dbReference>
<dbReference type="RefSeq" id="NP_001128993.1">
    <property type="nucleotide sequence ID" value="NM_001135521.1"/>
</dbReference>
<dbReference type="SMR" id="Q5R530"/>
<dbReference type="FunCoup" id="Q5R530">
    <property type="interactions" value="117"/>
</dbReference>
<dbReference type="STRING" id="9601.ENSPPYP00000019932"/>
<dbReference type="GlyCosmos" id="Q5R530">
    <property type="glycosylation" value="6 sites, No reported glycans"/>
</dbReference>
<dbReference type="GeneID" id="100190833"/>
<dbReference type="KEGG" id="pon:100190833"/>
<dbReference type="CTD" id="30010"/>
<dbReference type="eggNOG" id="ENOG502QQUX">
    <property type="taxonomic scope" value="Eukaryota"/>
</dbReference>
<dbReference type="InParanoid" id="Q5R530"/>
<dbReference type="OrthoDB" id="8690369at2759"/>
<dbReference type="Proteomes" id="UP000001595">
    <property type="component" value="Unplaced"/>
</dbReference>
<dbReference type="GO" id="GO:0005576">
    <property type="term" value="C:extracellular region"/>
    <property type="evidence" value="ECO:0007669"/>
    <property type="project" value="UniProtKB-SubCell"/>
</dbReference>
<dbReference type="GO" id="GO:0005102">
    <property type="term" value="F:signaling receptor binding"/>
    <property type="evidence" value="ECO:0007669"/>
    <property type="project" value="TreeGrafter"/>
</dbReference>
<dbReference type="InterPro" id="IPR010450">
    <property type="entry name" value="Nxph"/>
</dbReference>
<dbReference type="InterPro" id="IPR026845">
    <property type="entry name" value="NXPH/NXPE"/>
</dbReference>
<dbReference type="PANTHER" id="PTHR17103">
    <property type="entry name" value="NEUREXOPHILIN"/>
    <property type="match status" value="1"/>
</dbReference>
<dbReference type="PANTHER" id="PTHR17103:SF13">
    <property type="entry name" value="NEUREXOPHILIN-1"/>
    <property type="match status" value="1"/>
</dbReference>
<dbReference type="Pfam" id="PF06312">
    <property type="entry name" value="Neurexophilin"/>
    <property type="match status" value="1"/>
</dbReference>
<dbReference type="PIRSF" id="PIRSF038019">
    <property type="entry name" value="Neurexophilin"/>
    <property type="match status" value="1"/>
</dbReference>
<accession>Q5R530</accession>
<proteinExistence type="evidence at transcript level"/>
<protein>
    <recommendedName>
        <fullName>Neurexophilin-1</fullName>
    </recommendedName>
</protein>
<reference key="1">
    <citation type="submission" date="2004-11" db="EMBL/GenBank/DDBJ databases">
        <authorList>
            <consortium name="The German cDNA consortium"/>
        </authorList>
    </citation>
    <scope>NUCLEOTIDE SEQUENCE [LARGE SCALE MRNA]</scope>
    <source>
        <tissue>Brain cortex</tissue>
    </source>
</reference>
<evidence type="ECO:0000250" key="1"/>
<evidence type="ECO:0000255" key="2"/>
<evidence type="ECO:0000305" key="3"/>
<gene>
    <name type="primary">NXPH1</name>
</gene>
<comment type="function">
    <text evidence="3">May be signaling molecules that resemble neuropeptides and that act by binding to alpha-neurexins and possibly other receptors.</text>
</comment>
<comment type="subcellular location">
    <subcellularLocation>
        <location evidence="3">Secreted</location>
    </subcellularLocation>
</comment>
<comment type="similarity">
    <text evidence="3">Belongs to the neurexophilin family.</text>
</comment>
<keyword id="KW-0325">Glycoprotein</keyword>
<keyword id="KW-1185">Reference proteome</keyword>
<keyword id="KW-0964">Secreted</keyword>
<keyword id="KW-0732">Signal</keyword>
<feature type="signal peptide" evidence="2">
    <location>
        <begin position="1"/>
        <end position="21"/>
    </location>
</feature>
<feature type="chain" id="PRO_0000250712" description="Neurexophilin-1">
    <location>
        <begin position="22"/>
        <end position="271"/>
    </location>
</feature>
<feature type="region of interest" description="II" evidence="1">
    <location>
        <begin position="22"/>
        <end position="97"/>
    </location>
</feature>
<feature type="region of interest" description="III" evidence="1">
    <location>
        <begin position="98"/>
        <end position="176"/>
    </location>
</feature>
<feature type="region of interest" description="IV (linker domain)" evidence="1">
    <location>
        <begin position="177"/>
        <end position="185"/>
    </location>
</feature>
<feature type="region of interest" description="V (Cys-rich)" evidence="1">
    <location>
        <begin position="186"/>
        <end position="271"/>
    </location>
</feature>
<feature type="glycosylation site" description="N-linked (GlcNAc...) asparagine" evidence="2">
    <location>
        <position position="23"/>
    </location>
</feature>
<feature type="glycosylation site" description="N-linked (GlcNAc...) asparagine" evidence="2">
    <location>
        <position position="68"/>
    </location>
</feature>
<feature type="glycosylation site" description="N-linked (GlcNAc...) asparagine" evidence="2">
    <location>
        <position position="93"/>
    </location>
</feature>
<feature type="glycosylation site" description="N-linked (GlcNAc...) asparagine" evidence="2">
    <location>
        <position position="146"/>
    </location>
</feature>
<feature type="glycosylation site" description="N-linked (GlcNAc...) asparagine" evidence="2">
    <location>
        <position position="156"/>
    </location>
</feature>
<feature type="glycosylation site" description="N-linked (GlcNAc...) asparagine" evidence="2">
    <location>
        <position position="162"/>
    </location>
</feature>
<name>NXPH1_PONAB</name>
<organism>
    <name type="scientific">Pongo abelii</name>
    <name type="common">Sumatran orangutan</name>
    <name type="synonym">Pongo pygmaeus abelii</name>
    <dbReference type="NCBI Taxonomy" id="9601"/>
    <lineage>
        <taxon>Eukaryota</taxon>
        <taxon>Metazoa</taxon>
        <taxon>Chordata</taxon>
        <taxon>Craniata</taxon>
        <taxon>Vertebrata</taxon>
        <taxon>Euteleostomi</taxon>
        <taxon>Mammalia</taxon>
        <taxon>Eutheria</taxon>
        <taxon>Euarchontoglires</taxon>
        <taxon>Primates</taxon>
        <taxon>Haplorrhini</taxon>
        <taxon>Catarrhini</taxon>
        <taxon>Hominidae</taxon>
        <taxon>Pongo</taxon>
    </lineage>
</organism>
<sequence length="271" mass="31062">MQAACWYVLLLLQPTIYLVTCANLTNGGKSELLKSGSSKSTLKHIWTESSKDLSISRLLSQTFRGKENDTDLDLRYDTPEPYSEQDLWDWLRNSTDLQEPRPRAKRRPIVKTGKFKKMFGWGDFHSNIKTVKLNLLITGKIVDHGNGTFSVYFRHNSTGQGNVSVSLVPPTKIVEFDLAQQTVIDAKDSKSFNCRIEYEKVDKATKNTLCNYDPSKTCYQEQTQSHVSWLCSKPFKVICIYISFYSTDYKLVQKVCPDYNYHSDTPYFPSG</sequence>